<proteinExistence type="predicted"/>
<gene>
    <name type="ordered locus">YBR063C</name>
    <name type="ORF">YBR0610</name>
</gene>
<feature type="chain" id="PRO_0000202476" description="Uncharacterized protein YBR063C">
    <location>
        <begin position="1"/>
        <end position="404"/>
    </location>
</feature>
<feature type="transmembrane region" description="Helical" evidence="1">
    <location>
        <begin position="35"/>
        <end position="55"/>
    </location>
</feature>
<feature type="transmembrane region" description="Helical" evidence="1">
    <location>
        <begin position="92"/>
        <end position="112"/>
    </location>
</feature>
<name>YBR3_YEAST</name>
<protein>
    <recommendedName>
        <fullName>Uncharacterized protein YBR063C</fullName>
    </recommendedName>
</protein>
<comment type="subcellular location">
    <subcellularLocation>
        <location evidence="2">Membrane</location>
        <topology evidence="2">Multi-pass membrane protein</topology>
    </subcellularLocation>
</comment>
<accession>P38083</accession>
<accession>D6VQ63</accession>
<reference key="1">
    <citation type="journal article" date="1994" name="EMBO J.">
        <title>Complete DNA sequence of yeast chromosome II.</title>
        <authorList>
            <person name="Feldmann H."/>
            <person name="Aigle M."/>
            <person name="Aljinovic G."/>
            <person name="Andre B."/>
            <person name="Baclet M.C."/>
            <person name="Barthe C."/>
            <person name="Baur A."/>
            <person name="Becam A.-M."/>
            <person name="Biteau N."/>
            <person name="Boles E."/>
            <person name="Brandt T."/>
            <person name="Brendel M."/>
            <person name="Brueckner M."/>
            <person name="Bussereau F."/>
            <person name="Christiansen C."/>
            <person name="Contreras R."/>
            <person name="Crouzet M."/>
            <person name="Cziepluch C."/>
            <person name="Demolis N."/>
            <person name="Delaveau T."/>
            <person name="Doignon F."/>
            <person name="Domdey H."/>
            <person name="Duesterhus S."/>
            <person name="Dubois E."/>
            <person name="Dujon B."/>
            <person name="El Bakkoury M."/>
            <person name="Entian K.-D."/>
            <person name="Feuermann M."/>
            <person name="Fiers W."/>
            <person name="Fobo G.M."/>
            <person name="Fritz C."/>
            <person name="Gassenhuber J."/>
            <person name="Glansdorff N."/>
            <person name="Goffeau A."/>
            <person name="Grivell L.A."/>
            <person name="de Haan M."/>
            <person name="Hein C."/>
            <person name="Herbert C.J."/>
            <person name="Hollenberg C.P."/>
            <person name="Holmstroem K."/>
            <person name="Jacq C."/>
            <person name="Jacquet M."/>
            <person name="Jauniaux J.-C."/>
            <person name="Jonniaux J.-L."/>
            <person name="Kallesoee T."/>
            <person name="Kiesau P."/>
            <person name="Kirchrath L."/>
            <person name="Koetter P."/>
            <person name="Korol S."/>
            <person name="Liebl S."/>
            <person name="Logghe M."/>
            <person name="Lohan A.J.E."/>
            <person name="Louis E.J."/>
            <person name="Li Z.Y."/>
            <person name="Maat M.J."/>
            <person name="Mallet L."/>
            <person name="Mannhaupt G."/>
            <person name="Messenguy F."/>
            <person name="Miosga T."/>
            <person name="Molemans F."/>
            <person name="Mueller S."/>
            <person name="Nasr F."/>
            <person name="Obermaier B."/>
            <person name="Perea J."/>
            <person name="Pierard A."/>
            <person name="Piravandi E."/>
            <person name="Pohl F.M."/>
            <person name="Pohl T.M."/>
            <person name="Potier S."/>
            <person name="Proft M."/>
            <person name="Purnelle B."/>
            <person name="Ramezani Rad M."/>
            <person name="Rieger M."/>
            <person name="Rose M."/>
            <person name="Schaaff-Gerstenschlaeger I."/>
            <person name="Scherens B."/>
            <person name="Schwarzlose C."/>
            <person name="Skala J."/>
            <person name="Slonimski P.P."/>
            <person name="Smits P.H.M."/>
            <person name="Souciet J.-L."/>
            <person name="Steensma H.Y."/>
            <person name="Stucka R."/>
            <person name="Urrestarazu L.A."/>
            <person name="van der Aart Q.J.M."/>
            <person name="Van Dyck L."/>
            <person name="Vassarotti A."/>
            <person name="Vetter I."/>
            <person name="Vierendeels F."/>
            <person name="Vissers S."/>
            <person name="Wagner G."/>
            <person name="de Wergifosse P."/>
            <person name="Wolfe K.H."/>
            <person name="Zagulski M."/>
            <person name="Zimmermann F.K."/>
            <person name="Mewes H.-W."/>
            <person name="Kleine K."/>
        </authorList>
    </citation>
    <scope>NUCLEOTIDE SEQUENCE [LARGE SCALE GENOMIC DNA]</scope>
    <source>
        <strain>ATCC 204508 / S288c</strain>
    </source>
</reference>
<reference key="2">
    <citation type="journal article" date="2014" name="G3 (Bethesda)">
        <title>The reference genome sequence of Saccharomyces cerevisiae: Then and now.</title>
        <authorList>
            <person name="Engel S.R."/>
            <person name="Dietrich F.S."/>
            <person name="Fisk D.G."/>
            <person name="Binkley G."/>
            <person name="Balakrishnan R."/>
            <person name="Costanzo M.C."/>
            <person name="Dwight S.S."/>
            <person name="Hitz B.C."/>
            <person name="Karra K."/>
            <person name="Nash R.S."/>
            <person name="Weng S."/>
            <person name="Wong E.D."/>
            <person name="Lloyd P."/>
            <person name="Skrzypek M.S."/>
            <person name="Miyasato S.R."/>
            <person name="Simison M."/>
            <person name="Cherry J.M."/>
        </authorList>
    </citation>
    <scope>GENOME REANNOTATION</scope>
    <source>
        <strain>ATCC 204508 / S288c</strain>
    </source>
</reference>
<sequence length="404" mass="46445">MEELGLKSTFPYEYGSDFTMIRTEMLNTTKSETTILFSNIKSILAIIWKYSFTFLRSFSDSIKLIIDDVVTIGSRNFAERLQIEAKKNNDQEDIWASTIILGVIIGYLISSIKRKNTFPIMPTSSPKIDDCRFKTGDTISIVINFNEDCLNNRSDVTEERNYEESTVLHSKESVLSIGRQNMVTLNQSDENFTYGNFDEYDLLTKDYTTEVLTRSPGSNPEFKAVVNNTLLDSANETPFKGIEKSINETMVKVPMGCDVSLSHYGRQYAPGNISIMRSFTARDNTKSVSREIRDICKSFLIIKSQFGDELFLTMFMEKPVFFDNNIPIEITGAYREKRERLDEVIHKDLIRYDEVQNLTRIRNLLRVKSQKICSRRHNSSVPTKKLLVNDKGATSILLWYSNYS</sequence>
<dbReference type="EMBL" id="Z35932">
    <property type="protein sequence ID" value="CAA85006.1"/>
    <property type="molecule type" value="Genomic_DNA"/>
</dbReference>
<dbReference type="EMBL" id="BK006936">
    <property type="protein sequence ID" value="DAA07183.1"/>
    <property type="molecule type" value="Genomic_DNA"/>
</dbReference>
<dbReference type="PIR" id="S45923">
    <property type="entry name" value="S45923"/>
</dbReference>
<dbReference type="BioGRID" id="32767">
    <property type="interactions" value="76"/>
</dbReference>
<dbReference type="DIP" id="DIP-6322N"/>
<dbReference type="FunCoup" id="P38083">
    <property type="interactions" value="9"/>
</dbReference>
<dbReference type="IntAct" id="P38083">
    <property type="interactions" value="1"/>
</dbReference>
<dbReference type="STRING" id="4932.YBR063C"/>
<dbReference type="GlyGen" id="P38083">
    <property type="glycosylation" value="1 site"/>
</dbReference>
<dbReference type="iPTMnet" id="P38083"/>
<dbReference type="PaxDb" id="4932-YBR063C"/>
<dbReference type="EnsemblFungi" id="YBR063C_mRNA">
    <property type="protein sequence ID" value="YBR063C"/>
    <property type="gene ID" value="YBR063C"/>
</dbReference>
<dbReference type="KEGG" id="sce:YBR063C"/>
<dbReference type="AGR" id="SGD:S000000267"/>
<dbReference type="SGD" id="S000000267">
    <property type="gene designation" value="YBR063C"/>
</dbReference>
<dbReference type="VEuPathDB" id="FungiDB:YBR063C"/>
<dbReference type="HOGENOM" id="CLU_056793_0_0_1"/>
<dbReference type="InParanoid" id="P38083"/>
<dbReference type="OMA" id="TARDNTK"/>
<dbReference type="OrthoDB" id="4065855at2759"/>
<dbReference type="BioCyc" id="YEAST:G3O-29033-MONOMER"/>
<dbReference type="BioGRID-ORCS" id="852356">
    <property type="hits" value="0 hits in 10 CRISPR screens"/>
</dbReference>
<dbReference type="PRO" id="PR:P38083"/>
<dbReference type="Proteomes" id="UP000002311">
    <property type="component" value="Chromosome II"/>
</dbReference>
<dbReference type="RNAct" id="P38083">
    <property type="molecule type" value="protein"/>
</dbReference>
<dbReference type="GO" id="GO:0005741">
    <property type="term" value="C:mitochondrial outer membrane"/>
    <property type="evidence" value="ECO:0000314"/>
    <property type="project" value="SGD"/>
</dbReference>
<dbReference type="GO" id="GO:0005635">
    <property type="term" value="C:nuclear envelope"/>
    <property type="evidence" value="ECO:0000314"/>
    <property type="project" value="SGD"/>
</dbReference>
<dbReference type="GO" id="GO:0044232">
    <property type="term" value="C:organelle membrane contact site"/>
    <property type="evidence" value="ECO:0000314"/>
    <property type="project" value="SGD"/>
</dbReference>
<dbReference type="GO" id="GO:0140056">
    <property type="term" value="P:organelle localization by membrane tethering"/>
    <property type="evidence" value="ECO:0000314"/>
    <property type="project" value="SGD"/>
</dbReference>
<evidence type="ECO:0000255" key="1"/>
<evidence type="ECO:0000305" key="2"/>
<keyword id="KW-0472">Membrane</keyword>
<keyword id="KW-1185">Reference proteome</keyword>
<keyword id="KW-0812">Transmembrane</keyword>
<keyword id="KW-1133">Transmembrane helix</keyword>
<organism>
    <name type="scientific">Saccharomyces cerevisiae (strain ATCC 204508 / S288c)</name>
    <name type="common">Baker's yeast</name>
    <dbReference type="NCBI Taxonomy" id="559292"/>
    <lineage>
        <taxon>Eukaryota</taxon>
        <taxon>Fungi</taxon>
        <taxon>Dikarya</taxon>
        <taxon>Ascomycota</taxon>
        <taxon>Saccharomycotina</taxon>
        <taxon>Saccharomycetes</taxon>
        <taxon>Saccharomycetales</taxon>
        <taxon>Saccharomycetaceae</taxon>
        <taxon>Saccharomyces</taxon>
    </lineage>
</organism>